<evidence type="ECO:0000255" key="1">
    <source>
        <dbReference type="HAMAP-Rule" id="MF_00060"/>
    </source>
</evidence>
<dbReference type="EC" id="3.1.3.5" evidence="1"/>
<dbReference type="EMBL" id="AE008691">
    <property type="protein sequence ID" value="AAM24560.1"/>
    <property type="molecule type" value="Genomic_DNA"/>
</dbReference>
<dbReference type="RefSeq" id="WP_009610237.1">
    <property type="nucleotide sequence ID" value="NC_003869.1"/>
</dbReference>
<dbReference type="SMR" id="Q8RA90"/>
<dbReference type="STRING" id="273068.TTE1338"/>
<dbReference type="KEGG" id="tte:TTE1338"/>
<dbReference type="eggNOG" id="COG0496">
    <property type="taxonomic scope" value="Bacteria"/>
</dbReference>
<dbReference type="HOGENOM" id="CLU_045192_1_3_9"/>
<dbReference type="OrthoDB" id="9780815at2"/>
<dbReference type="Proteomes" id="UP000000555">
    <property type="component" value="Chromosome"/>
</dbReference>
<dbReference type="GO" id="GO:0005737">
    <property type="term" value="C:cytoplasm"/>
    <property type="evidence" value="ECO:0007669"/>
    <property type="project" value="UniProtKB-SubCell"/>
</dbReference>
<dbReference type="GO" id="GO:0008254">
    <property type="term" value="F:3'-nucleotidase activity"/>
    <property type="evidence" value="ECO:0007669"/>
    <property type="project" value="TreeGrafter"/>
</dbReference>
<dbReference type="GO" id="GO:0008253">
    <property type="term" value="F:5'-nucleotidase activity"/>
    <property type="evidence" value="ECO:0007669"/>
    <property type="project" value="UniProtKB-UniRule"/>
</dbReference>
<dbReference type="GO" id="GO:0004309">
    <property type="term" value="F:exopolyphosphatase activity"/>
    <property type="evidence" value="ECO:0007669"/>
    <property type="project" value="TreeGrafter"/>
</dbReference>
<dbReference type="GO" id="GO:0046872">
    <property type="term" value="F:metal ion binding"/>
    <property type="evidence" value="ECO:0007669"/>
    <property type="project" value="UniProtKB-UniRule"/>
</dbReference>
<dbReference type="GO" id="GO:0000166">
    <property type="term" value="F:nucleotide binding"/>
    <property type="evidence" value="ECO:0007669"/>
    <property type="project" value="UniProtKB-KW"/>
</dbReference>
<dbReference type="FunFam" id="3.40.1210.10:FF:000001">
    <property type="entry name" value="5'/3'-nucleotidase SurE"/>
    <property type="match status" value="1"/>
</dbReference>
<dbReference type="Gene3D" id="3.40.1210.10">
    <property type="entry name" value="Survival protein SurE-like phosphatase/nucleotidase"/>
    <property type="match status" value="1"/>
</dbReference>
<dbReference type="HAMAP" id="MF_00060">
    <property type="entry name" value="SurE"/>
    <property type="match status" value="1"/>
</dbReference>
<dbReference type="InterPro" id="IPR030048">
    <property type="entry name" value="SurE"/>
</dbReference>
<dbReference type="InterPro" id="IPR002828">
    <property type="entry name" value="SurE-like_Pase/nucleotidase"/>
</dbReference>
<dbReference type="InterPro" id="IPR036523">
    <property type="entry name" value="SurE-like_sf"/>
</dbReference>
<dbReference type="NCBIfam" id="NF001490">
    <property type="entry name" value="PRK00346.1-4"/>
    <property type="match status" value="1"/>
</dbReference>
<dbReference type="NCBIfam" id="NF001492">
    <property type="entry name" value="PRK00346.2-2"/>
    <property type="match status" value="1"/>
</dbReference>
<dbReference type="NCBIfam" id="TIGR00087">
    <property type="entry name" value="surE"/>
    <property type="match status" value="1"/>
</dbReference>
<dbReference type="PANTHER" id="PTHR30457">
    <property type="entry name" value="5'-NUCLEOTIDASE SURE"/>
    <property type="match status" value="1"/>
</dbReference>
<dbReference type="PANTHER" id="PTHR30457:SF12">
    <property type="entry name" value="5'_3'-NUCLEOTIDASE SURE"/>
    <property type="match status" value="1"/>
</dbReference>
<dbReference type="Pfam" id="PF01975">
    <property type="entry name" value="SurE"/>
    <property type="match status" value="1"/>
</dbReference>
<dbReference type="SUPFAM" id="SSF64167">
    <property type="entry name" value="SurE-like"/>
    <property type="match status" value="1"/>
</dbReference>
<comment type="function">
    <text evidence="1">Nucleotidase that shows phosphatase activity on nucleoside 5'-monophosphates.</text>
</comment>
<comment type="catalytic activity">
    <reaction evidence="1">
        <text>a ribonucleoside 5'-phosphate + H2O = a ribonucleoside + phosphate</text>
        <dbReference type="Rhea" id="RHEA:12484"/>
        <dbReference type="ChEBI" id="CHEBI:15377"/>
        <dbReference type="ChEBI" id="CHEBI:18254"/>
        <dbReference type="ChEBI" id="CHEBI:43474"/>
        <dbReference type="ChEBI" id="CHEBI:58043"/>
        <dbReference type="EC" id="3.1.3.5"/>
    </reaction>
</comment>
<comment type="cofactor">
    <cofactor evidence="1">
        <name>a divalent metal cation</name>
        <dbReference type="ChEBI" id="CHEBI:60240"/>
    </cofactor>
    <text evidence="1">Binds 1 divalent metal cation per subunit.</text>
</comment>
<comment type="subcellular location">
    <subcellularLocation>
        <location evidence="1">Cytoplasm</location>
    </subcellularLocation>
</comment>
<comment type="similarity">
    <text evidence="1">Belongs to the SurE nucleotidase family.</text>
</comment>
<feature type="chain" id="PRO_0000111847" description="5'-nucleotidase SurE">
    <location>
        <begin position="1"/>
        <end position="255"/>
    </location>
</feature>
<feature type="binding site" evidence="1">
    <location>
        <position position="11"/>
    </location>
    <ligand>
        <name>a divalent metal cation</name>
        <dbReference type="ChEBI" id="CHEBI:60240"/>
    </ligand>
</feature>
<feature type="binding site" evidence="1">
    <location>
        <position position="12"/>
    </location>
    <ligand>
        <name>a divalent metal cation</name>
        <dbReference type="ChEBI" id="CHEBI:60240"/>
    </ligand>
</feature>
<feature type="binding site" evidence="1">
    <location>
        <position position="43"/>
    </location>
    <ligand>
        <name>a divalent metal cation</name>
        <dbReference type="ChEBI" id="CHEBI:60240"/>
    </ligand>
</feature>
<feature type="binding site" evidence="1">
    <location>
        <position position="99"/>
    </location>
    <ligand>
        <name>a divalent metal cation</name>
        <dbReference type="ChEBI" id="CHEBI:60240"/>
    </ligand>
</feature>
<reference key="1">
    <citation type="journal article" date="2002" name="Genome Res.">
        <title>A complete sequence of the T. tengcongensis genome.</title>
        <authorList>
            <person name="Bao Q."/>
            <person name="Tian Y."/>
            <person name="Li W."/>
            <person name="Xu Z."/>
            <person name="Xuan Z."/>
            <person name="Hu S."/>
            <person name="Dong W."/>
            <person name="Yang J."/>
            <person name="Chen Y."/>
            <person name="Xue Y."/>
            <person name="Xu Y."/>
            <person name="Lai X."/>
            <person name="Huang L."/>
            <person name="Dong X."/>
            <person name="Ma Y."/>
            <person name="Ling L."/>
            <person name="Tan H."/>
            <person name="Chen R."/>
            <person name="Wang J."/>
            <person name="Yu J."/>
            <person name="Yang H."/>
        </authorList>
    </citation>
    <scope>NUCLEOTIDE SEQUENCE [LARGE SCALE GENOMIC DNA]</scope>
    <source>
        <strain>DSM 15242 / JCM 11007 / NBRC 100824 / MB4</strain>
    </source>
</reference>
<protein>
    <recommendedName>
        <fullName evidence="1">5'-nucleotidase SurE</fullName>
        <ecNumber evidence="1">3.1.3.5</ecNumber>
    </recommendedName>
    <alternativeName>
        <fullName evidence="1">Nucleoside 5'-monophosphate phosphohydrolase</fullName>
    </alternativeName>
</protein>
<proteinExistence type="inferred from homology"/>
<organism>
    <name type="scientific">Caldanaerobacter subterraneus subsp. tengcongensis (strain DSM 15242 / JCM 11007 / NBRC 100824 / MB4)</name>
    <name type="common">Thermoanaerobacter tengcongensis</name>
    <dbReference type="NCBI Taxonomy" id="273068"/>
    <lineage>
        <taxon>Bacteria</taxon>
        <taxon>Bacillati</taxon>
        <taxon>Bacillota</taxon>
        <taxon>Clostridia</taxon>
        <taxon>Thermoanaerobacterales</taxon>
        <taxon>Thermoanaerobacteraceae</taxon>
        <taxon>Caldanaerobacter</taxon>
    </lineage>
</organism>
<keyword id="KW-0963">Cytoplasm</keyword>
<keyword id="KW-0378">Hydrolase</keyword>
<keyword id="KW-0479">Metal-binding</keyword>
<keyword id="KW-0547">Nucleotide-binding</keyword>
<keyword id="KW-1185">Reference proteome</keyword>
<accession>Q8RA90</accession>
<gene>
    <name evidence="1" type="primary">surE</name>
    <name type="ordered locus">TTE1338</name>
</gene>
<name>SURE_CALS4</name>
<sequence length="255" mass="28631">MGKTSVLLTNDDGVQAKGILYLAEYLKENGFDVVVVAPEKERSAISHAITLHKPLRLKPVREEENLRIYAINGTPSDCVKMGIEVVMEKNPDIIISGINNGLNMGTDILYSGTVSAAIEGALYGIPALAVSLEEDGDFEEQRMYIFLKKLIEKVLEEGLPKNTLLNVNIPDFRKGINGIRITILGKRIYTETFQKNYDPRGKEYYWMAGKISEIDNDERTDIVSVKKGYISITPIHFDLTDYEAVKKLSSWKIDI</sequence>